<feature type="chain" id="PRO_0000090681" description="Mitochondrial carnitine carrier">
    <location>
        <begin position="1"/>
        <end position="327"/>
    </location>
</feature>
<feature type="transmembrane region" description="Helical; Name=1" evidence="1">
    <location>
        <begin position="33"/>
        <end position="49"/>
    </location>
</feature>
<feature type="transmembrane region" description="Helical; Name=2" evidence="1">
    <location>
        <begin position="107"/>
        <end position="123"/>
    </location>
</feature>
<feature type="transmembrane region" description="Helical; Name=3" evidence="1">
    <location>
        <begin position="141"/>
        <end position="162"/>
    </location>
</feature>
<feature type="transmembrane region" description="Helical; Name=4" evidence="1">
    <location>
        <begin position="196"/>
        <end position="212"/>
    </location>
</feature>
<feature type="transmembrane region" description="Helical; Name=5" evidence="1">
    <location>
        <begin position="244"/>
        <end position="260"/>
    </location>
</feature>
<feature type="transmembrane region" description="Helical; Name=6" evidence="1">
    <location>
        <begin position="293"/>
        <end position="313"/>
    </location>
</feature>
<feature type="repeat" description="Solcar 1">
    <location>
        <begin position="33"/>
        <end position="126"/>
    </location>
</feature>
<feature type="repeat" description="Solcar 2">
    <location>
        <begin position="139"/>
        <end position="221"/>
    </location>
</feature>
<feature type="repeat" description="Solcar 3">
    <location>
        <begin position="237"/>
        <end position="321"/>
    </location>
</feature>
<feature type="region of interest" description="Disordered" evidence="2">
    <location>
        <begin position="1"/>
        <end position="29"/>
    </location>
</feature>
<feature type="compositionally biased region" description="Low complexity" evidence="2">
    <location>
        <begin position="1"/>
        <end position="11"/>
    </location>
</feature>
<keyword id="KW-0472">Membrane</keyword>
<keyword id="KW-0496">Mitochondrion</keyword>
<keyword id="KW-0999">Mitochondrion inner membrane</keyword>
<keyword id="KW-1185">Reference proteome</keyword>
<keyword id="KW-0677">Repeat</keyword>
<keyword id="KW-0812">Transmembrane</keyword>
<keyword id="KW-1133">Transmembrane helix</keyword>
<keyword id="KW-0813">Transport</keyword>
<organism>
    <name type="scientific">Saccharomyces cerevisiae (strain ATCC 204508 / S288c)</name>
    <name type="common">Baker's yeast</name>
    <dbReference type="NCBI Taxonomy" id="559292"/>
    <lineage>
        <taxon>Eukaryota</taxon>
        <taxon>Fungi</taxon>
        <taxon>Dikarya</taxon>
        <taxon>Ascomycota</taxon>
        <taxon>Saccharomycotina</taxon>
        <taxon>Saccharomycetes</taxon>
        <taxon>Saccharomycetales</taxon>
        <taxon>Saccharomycetaceae</taxon>
        <taxon>Saccharomyces</taxon>
    </lineage>
</organism>
<dbReference type="EMBL" id="AJ250124">
    <property type="protein sequence ID" value="CAB64359.1"/>
    <property type="molecule type" value="Genomic_DNA"/>
</dbReference>
<dbReference type="EMBL" id="X94335">
    <property type="protein sequence ID" value="CAA64022.1"/>
    <property type="molecule type" value="Genomic_DNA"/>
</dbReference>
<dbReference type="EMBL" id="Z75008">
    <property type="protein sequence ID" value="CAA99297.1"/>
    <property type="molecule type" value="Genomic_DNA"/>
</dbReference>
<dbReference type="EMBL" id="AY693195">
    <property type="protein sequence ID" value="AAT93214.1"/>
    <property type="molecule type" value="Genomic_DNA"/>
</dbReference>
<dbReference type="EMBL" id="BK006948">
    <property type="protein sequence ID" value="DAA10877.1"/>
    <property type="molecule type" value="Genomic_DNA"/>
</dbReference>
<dbReference type="PIR" id="S61660">
    <property type="entry name" value="S61660"/>
</dbReference>
<dbReference type="RefSeq" id="NP_014743.1">
    <property type="nucleotide sequence ID" value="NM_001183519.1"/>
</dbReference>
<dbReference type="SMR" id="Q12289"/>
<dbReference type="BioGRID" id="34498">
    <property type="interactions" value="108"/>
</dbReference>
<dbReference type="DIP" id="DIP-4154N"/>
<dbReference type="FunCoup" id="Q12289">
    <property type="interactions" value="372"/>
</dbReference>
<dbReference type="IntAct" id="Q12289">
    <property type="interactions" value="3"/>
</dbReference>
<dbReference type="MINT" id="Q12289"/>
<dbReference type="STRING" id="4932.YOR100C"/>
<dbReference type="TCDB" id="2.A.29.8.4">
    <property type="family name" value="the mitochondrial carrier (mc) family"/>
</dbReference>
<dbReference type="PaxDb" id="4932-YOR100C"/>
<dbReference type="PeptideAtlas" id="Q12289"/>
<dbReference type="EnsemblFungi" id="YOR100C_mRNA">
    <property type="protein sequence ID" value="YOR100C"/>
    <property type="gene ID" value="YOR100C"/>
</dbReference>
<dbReference type="GeneID" id="854267"/>
<dbReference type="KEGG" id="sce:YOR100C"/>
<dbReference type="AGR" id="SGD:S000005626"/>
<dbReference type="SGD" id="S000005626">
    <property type="gene designation" value="CRC1"/>
</dbReference>
<dbReference type="VEuPathDB" id="FungiDB:YOR100C"/>
<dbReference type="eggNOG" id="KOG0758">
    <property type="taxonomic scope" value="Eukaryota"/>
</dbReference>
<dbReference type="GeneTree" id="ENSGT00940000167609"/>
<dbReference type="HOGENOM" id="CLU_015166_16_0_1"/>
<dbReference type="InParanoid" id="Q12289"/>
<dbReference type="OMA" id="NWAVGIP"/>
<dbReference type="OrthoDB" id="14252at2759"/>
<dbReference type="BioCyc" id="YEAST:G3O-33633-MONOMER"/>
<dbReference type="Reactome" id="R-SCE-200425">
    <property type="pathway name" value="Carnitine shuttle"/>
</dbReference>
<dbReference type="BioGRID-ORCS" id="854267">
    <property type="hits" value="1 hit in 10 CRISPR screens"/>
</dbReference>
<dbReference type="PRO" id="PR:Q12289"/>
<dbReference type="Proteomes" id="UP000002311">
    <property type="component" value="Chromosome XV"/>
</dbReference>
<dbReference type="RNAct" id="Q12289">
    <property type="molecule type" value="protein"/>
</dbReference>
<dbReference type="GO" id="GO:0005740">
    <property type="term" value="C:mitochondrial envelope"/>
    <property type="evidence" value="ECO:0000318"/>
    <property type="project" value="GO_Central"/>
</dbReference>
<dbReference type="GO" id="GO:0005743">
    <property type="term" value="C:mitochondrial inner membrane"/>
    <property type="evidence" value="ECO:0000314"/>
    <property type="project" value="SGD"/>
</dbReference>
<dbReference type="GO" id="GO:0005739">
    <property type="term" value="C:mitochondrion"/>
    <property type="evidence" value="ECO:0007005"/>
    <property type="project" value="SGD"/>
</dbReference>
<dbReference type="GO" id="GO:0005476">
    <property type="term" value="F:carnitine:O-acyl-L-carnitine antiporter activity"/>
    <property type="evidence" value="ECO:0000314"/>
    <property type="project" value="SGD"/>
</dbReference>
<dbReference type="GO" id="GO:0015227">
    <property type="term" value="F:O-acyl-L-carnitine transmembrane transporter activity"/>
    <property type="evidence" value="ECO:0000318"/>
    <property type="project" value="GO_Central"/>
</dbReference>
<dbReference type="GO" id="GO:1902603">
    <property type="term" value="P:carnitine transmembrane transport"/>
    <property type="evidence" value="ECO:0000314"/>
    <property type="project" value="SGD"/>
</dbReference>
<dbReference type="GO" id="GO:0006631">
    <property type="term" value="P:fatty acid metabolic process"/>
    <property type="evidence" value="ECO:0000314"/>
    <property type="project" value="SGD"/>
</dbReference>
<dbReference type="GO" id="GO:0006839">
    <property type="term" value="P:mitochondrial transport"/>
    <property type="evidence" value="ECO:0000318"/>
    <property type="project" value="GO_Central"/>
</dbReference>
<dbReference type="FunFam" id="1.50.40.10:FF:000060">
    <property type="entry name" value="Mitochondrial carnitine carrier"/>
    <property type="match status" value="1"/>
</dbReference>
<dbReference type="FunFam" id="1.50.40.10:FF:000145">
    <property type="entry name" value="Mitochondrial carnitine carrier"/>
    <property type="match status" value="1"/>
</dbReference>
<dbReference type="Gene3D" id="1.50.40.10">
    <property type="entry name" value="Mitochondrial carrier domain"/>
    <property type="match status" value="2"/>
</dbReference>
<dbReference type="InterPro" id="IPR050567">
    <property type="entry name" value="Mitochondrial_Carrier"/>
</dbReference>
<dbReference type="InterPro" id="IPR018108">
    <property type="entry name" value="Mitochondrial_sb/sol_carrier"/>
</dbReference>
<dbReference type="InterPro" id="IPR023395">
    <property type="entry name" value="Mt_carrier_dom_sf"/>
</dbReference>
<dbReference type="PANTHER" id="PTHR45624:SF4">
    <property type="entry name" value="CONGESTED-LIKE TRACHEA PROTEIN-RELATED"/>
    <property type="match status" value="1"/>
</dbReference>
<dbReference type="PANTHER" id="PTHR45624">
    <property type="entry name" value="MITOCHONDRIAL BASIC AMINO ACIDS TRANSPORTER-RELATED"/>
    <property type="match status" value="1"/>
</dbReference>
<dbReference type="Pfam" id="PF00153">
    <property type="entry name" value="Mito_carr"/>
    <property type="match status" value="3"/>
</dbReference>
<dbReference type="SUPFAM" id="SSF103506">
    <property type="entry name" value="Mitochondrial carrier"/>
    <property type="match status" value="1"/>
</dbReference>
<dbReference type="PROSITE" id="PS50920">
    <property type="entry name" value="SOLCAR"/>
    <property type="match status" value="3"/>
</dbReference>
<accession>Q12289</accession>
<accession>D6W2G1</accession>
<protein>
    <recommendedName>
        <fullName>Mitochondrial carnitine carrier</fullName>
    </recommendedName>
</protein>
<reference key="1">
    <citation type="journal article" date="1999" name="FEBS Lett.">
        <title>Identification of the mitochondrial carnitine carrier in Saccharomyces cerevisiae.</title>
        <authorList>
            <person name="Palmieri L."/>
            <person name="Lasorsa F.M."/>
            <person name="Iacobazzi V."/>
            <person name="Runswick M.J."/>
            <person name="Palmieri F."/>
            <person name="Walker J.E."/>
        </authorList>
    </citation>
    <scope>NUCLEOTIDE SEQUENCE [GENOMIC DNA]</scope>
    <scope>FUNCTION</scope>
    <source>
        <strain>ATCC 96099 / S288c / SEY6210</strain>
    </source>
</reference>
<reference key="2">
    <citation type="journal article" date="1997" name="Yeast">
        <title>DNA sequencing and analysis of 130 kb from yeast chromosome XV.</title>
        <authorList>
            <person name="Voss H."/>
            <person name="Benes V."/>
            <person name="Andrade M.A."/>
            <person name="Valencia A."/>
            <person name="Rechmann S."/>
            <person name="Teodoru C."/>
            <person name="Schwager C."/>
            <person name="Paces V."/>
            <person name="Sander C."/>
            <person name="Ansorge W."/>
        </authorList>
    </citation>
    <scope>NUCLEOTIDE SEQUENCE [GENOMIC DNA]</scope>
</reference>
<reference key="3">
    <citation type="journal article" date="1997" name="Nature">
        <title>The nucleotide sequence of Saccharomyces cerevisiae chromosome XV.</title>
        <authorList>
            <person name="Dujon B."/>
            <person name="Albermann K."/>
            <person name="Aldea M."/>
            <person name="Alexandraki D."/>
            <person name="Ansorge W."/>
            <person name="Arino J."/>
            <person name="Benes V."/>
            <person name="Bohn C."/>
            <person name="Bolotin-Fukuhara M."/>
            <person name="Bordonne R."/>
            <person name="Boyer J."/>
            <person name="Camasses A."/>
            <person name="Casamayor A."/>
            <person name="Casas C."/>
            <person name="Cheret G."/>
            <person name="Cziepluch C."/>
            <person name="Daignan-Fornier B."/>
            <person name="Dang V.-D."/>
            <person name="de Haan M."/>
            <person name="Delius H."/>
            <person name="Durand P."/>
            <person name="Fairhead C."/>
            <person name="Feldmann H."/>
            <person name="Gaillon L."/>
            <person name="Galisson F."/>
            <person name="Gamo F.-J."/>
            <person name="Gancedo C."/>
            <person name="Goffeau A."/>
            <person name="Goulding S.E."/>
            <person name="Grivell L.A."/>
            <person name="Habbig B."/>
            <person name="Hand N.J."/>
            <person name="Hani J."/>
            <person name="Hattenhorst U."/>
            <person name="Hebling U."/>
            <person name="Hernando Y."/>
            <person name="Herrero E."/>
            <person name="Heumann K."/>
            <person name="Hiesel R."/>
            <person name="Hilger F."/>
            <person name="Hofmann B."/>
            <person name="Hollenberg C.P."/>
            <person name="Hughes B."/>
            <person name="Jauniaux J.-C."/>
            <person name="Kalogeropoulos A."/>
            <person name="Katsoulou C."/>
            <person name="Kordes E."/>
            <person name="Lafuente M.J."/>
            <person name="Landt O."/>
            <person name="Louis E.J."/>
            <person name="Maarse A.C."/>
            <person name="Madania A."/>
            <person name="Mannhaupt G."/>
            <person name="Marck C."/>
            <person name="Martin R.P."/>
            <person name="Mewes H.-W."/>
            <person name="Michaux G."/>
            <person name="Paces V."/>
            <person name="Parle-McDermott A.G."/>
            <person name="Pearson B.M."/>
            <person name="Perrin A."/>
            <person name="Pettersson B."/>
            <person name="Poch O."/>
            <person name="Pohl T.M."/>
            <person name="Poirey R."/>
            <person name="Portetelle D."/>
            <person name="Pujol A."/>
            <person name="Purnelle B."/>
            <person name="Ramezani Rad M."/>
            <person name="Rechmann S."/>
            <person name="Schwager C."/>
            <person name="Schweizer M."/>
            <person name="Sor F."/>
            <person name="Sterky F."/>
            <person name="Tarassov I.A."/>
            <person name="Teodoru C."/>
            <person name="Tettelin H."/>
            <person name="Thierry A."/>
            <person name="Tobiasch E."/>
            <person name="Tzermia M."/>
            <person name="Uhlen M."/>
            <person name="Unseld M."/>
            <person name="Valens M."/>
            <person name="Vandenbol M."/>
            <person name="Vetter I."/>
            <person name="Vlcek C."/>
            <person name="Voet M."/>
            <person name="Volckaert G."/>
            <person name="Voss H."/>
            <person name="Wambutt R."/>
            <person name="Wedler H."/>
            <person name="Wiemann S."/>
            <person name="Winsor B."/>
            <person name="Wolfe K.H."/>
            <person name="Zollner A."/>
            <person name="Zumstein E."/>
            <person name="Kleine K."/>
        </authorList>
    </citation>
    <scope>NUCLEOTIDE SEQUENCE [LARGE SCALE GENOMIC DNA]</scope>
    <source>
        <strain>ATCC 204508 / S288c</strain>
    </source>
</reference>
<reference key="4">
    <citation type="journal article" date="2014" name="G3 (Bethesda)">
        <title>The reference genome sequence of Saccharomyces cerevisiae: Then and now.</title>
        <authorList>
            <person name="Engel S.R."/>
            <person name="Dietrich F.S."/>
            <person name="Fisk D.G."/>
            <person name="Binkley G."/>
            <person name="Balakrishnan R."/>
            <person name="Costanzo M.C."/>
            <person name="Dwight S.S."/>
            <person name="Hitz B.C."/>
            <person name="Karra K."/>
            <person name="Nash R.S."/>
            <person name="Weng S."/>
            <person name="Wong E.D."/>
            <person name="Lloyd P."/>
            <person name="Skrzypek M.S."/>
            <person name="Miyasato S.R."/>
            <person name="Simison M."/>
            <person name="Cherry J.M."/>
        </authorList>
    </citation>
    <scope>GENOME REANNOTATION</scope>
    <source>
        <strain>ATCC 204508 / S288c</strain>
    </source>
</reference>
<reference key="5">
    <citation type="journal article" date="2007" name="Genome Res.">
        <title>Approaching a complete repository of sequence-verified protein-encoding clones for Saccharomyces cerevisiae.</title>
        <authorList>
            <person name="Hu Y."/>
            <person name="Rolfs A."/>
            <person name="Bhullar B."/>
            <person name="Murthy T.V.S."/>
            <person name="Zhu C."/>
            <person name="Berger M.F."/>
            <person name="Camargo A.A."/>
            <person name="Kelley F."/>
            <person name="McCarron S."/>
            <person name="Jepson D."/>
            <person name="Richardson A."/>
            <person name="Raphael J."/>
            <person name="Moreira D."/>
            <person name="Taycher E."/>
            <person name="Zuo D."/>
            <person name="Mohr S."/>
            <person name="Kane M.F."/>
            <person name="Williamson J."/>
            <person name="Simpson A.J.G."/>
            <person name="Bulyk M.L."/>
            <person name="Harlow E."/>
            <person name="Marsischky G."/>
            <person name="Kolodner R.D."/>
            <person name="LaBaer J."/>
        </authorList>
    </citation>
    <scope>NUCLEOTIDE SEQUENCE [GENOMIC DNA]</scope>
    <source>
        <strain>ATCC 204508 / S288c</strain>
    </source>
</reference>
<reference key="6">
    <citation type="journal article" date="1999" name="EMBO J.">
        <title>Molecular characterization of carnitine-dependent transport of acetyl-CoA from peroxisomes to mitochondria in Saccharomyces cerevisiae and identification of a plasma membrane carnitine transporter, Agp2p.</title>
        <authorList>
            <person name="van Roermund C.W."/>
            <person name="Hettema E.H."/>
            <person name="van den Berg M."/>
            <person name="Tabak H.F."/>
            <person name="Wanders R.J."/>
        </authorList>
    </citation>
    <scope>FUNCTION IN CARNITINE TRANSPORT</scope>
</reference>
<sequence>MSSDTSLSESSLLKEESGSLTKSRPPIKSNPVRENIKSFVAGGVGGVCAVFTGHPFDLIKVRCQNGQANSTVHAITNIIKEAKTQVKGTLFTNSVKGFYKGVIPPLLGVTPIFAVSFWGYDVGKKLVTFNNKQGGSNELTMGQMAAAGFISAIPTTLVTAPTERVKVVLQTSSKGSFIQAAKTIVKEGGIASLFKGSLATLARDGPGSALYFASYEISKNYLNSRQPRQDAGKDEPVNILNVCLAGGIAGMSMWLAVFPIDTIKTKLQASSTRQNMLSATKEIYLQRGGIKGFFPGLGPALLRSFPANAATFLGVEMTHSLFKKYGI</sequence>
<gene>
    <name type="primary">CRC1</name>
    <name type="ordered locus">YOR100C</name>
    <name type="ORF">YOR3193C</name>
</gene>
<evidence type="ECO:0000255" key="1"/>
<evidence type="ECO:0000256" key="2">
    <source>
        <dbReference type="SAM" id="MobiDB-lite"/>
    </source>
</evidence>
<evidence type="ECO:0000269" key="3">
    <source>
    </source>
</evidence>
<evidence type="ECO:0000269" key="4">
    <source>
    </source>
</evidence>
<evidence type="ECO:0000305" key="5"/>
<comment type="function">
    <text evidence="3 4">Transports carnitine, acetylcarnitine, propionylcarnitine and to a much lower extent medium- and long-chain acylcarnitines.</text>
</comment>
<comment type="subcellular location">
    <subcellularLocation>
        <location evidence="5">Mitochondrion inner membrane</location>
        <topology evidence="5">Multi-pass membrane protein</topology>
    </subcellularLocation>
</comment>
<comment type="similarity">
    <text evidence="5">Belongs to the mitochondrial carrier (TC 2.A.29) family.</text>
</comment>
<name>CRC1_YEAST</name>
<proteinExistence type="evidence at protein level"/>